<dbReference type="EC" id="2.9.1.3" evidence="1"/>
<dbReference type="EMBL" id="CP000880">
    <property type="protein sequence ID" value="ABX22283.1"/>
    <property type="molecule type" value="Genomic_DNA"/>
</dbReference>
<dbReference type="SMR" id="A9MLB3"/>
<dbReference type="STRING" id="41514.SARI_02421"/>
<dbReference type="KEGG" id="ses:SARI_02421"/>
<dbReference type="HOGENOM" id="CLU_043456_1_0_6"/>
<dbReference type="Proteomes" id="UP000002084">
    <property type="component" value="Chromosome"/>
</dbReference>
<dbReference type="GO" id="GO:0016765">
    <property type="term" value="F:transferase activity, transferring alkyl or aryl (other than methyl) groups"/>
    <property type="evidence" value="ECO:0007669"/>
    <property type="project" value="UniProtKB-UniRule"/>
</dbReference>
<dbReference type="GO" id="GO:0043828">
    <property type="term" value="F:tRNA 2-selenouridine synthase activity"/>
    <property type="evidence" value="ECO:0007669"/>
    <property type="project" value="UniProtKB-EC"/>
</dbReference>
<dbReference type="GO" id="GO:0002098">
    <property type="term" value="P:tRNA wobble uridine modification"/>
    <property type="evidence" value="ECO:0007669"/>
    <property type="project" value="UniProtKB-UniRule"/>
</dbReference>
<dbReference type="CDD" id="cd01520">
    <property type="entry name" value="RHOD_YbbB"/>
    <property type="match status" value="1"/>
</dbReference>
<dbReference type="FunFam" id="3.40.250.10:FF:000009">
    <property type="entry name" value="tRNA 2-selenouridine/geranyl-2-thiouridine synthase"/>
    <property type="match status" value="1"/>
</dbReference>
<dbReference type="Gene3D" id="3.40.250.10">
    <property type="entry name" value="Rhodanese-like domain"/>
    <property type="match status" value="1"/>
</dbReference>
<dbReference type="HAMAP" id="MF_01622">
    <property type="entry name" value="tRNA_sel_U_synth"/>
    <property type="match status" value="1"/>
</dbReference>
<dbReference type="InterPro" id="IPR001763">
    <property type="entry name" value="Rhodanese-like_dom"/>
</dbReference>
<dbReference type="InterPro" id="IPR036873">
    <property type="entry name" value="Rhodanese-like_dom_sf"/>
</dbReference>
<dbReference type="InterPro" id="IPR017582">
    <property type="entry name" value="SelU"/>
</dbReference>
<dbReference type="NCBIfam" id="NF008749">
    <property type="entry name" value="PRK11784.1-1"/>
    <property type="match status" value="1"/>
</dbReference>
<dbReference type="NCBIfam" id="NF008751">
    <property type="entry name" value="PRK11784.1-3"/>
    <property type="match status" value="1"/>
</dbReference>
<dbReference type="NCBIfam" id="TIGR03167">
    <property type="entry name" value="tRNA_sel_U_synt"/>
    <property type="match status" value="1"/>
</dbReference>
<dbReference type="PANTHER" id="PTHR30401">
    <property type="entry name" value="TRNA 2-SELENOURIDINE SYNTHASE"/>
    <property type="match status" value="1"/>
</dbReference>
<dbReference type="PANTHER" id="PTHR30401:SF0">
    <property type="entry name" value="TRNA 2-SELENOURIDINE SYNTHASE"/>
    <property type="match status" value="1"/>
</dbReference>
<dbReference type="Pfam" id="PF00581">
    <property type="entry name" value="Rhodanese"/>
    <property type="match status" value="1"/>
</dbReference>
<dbReference type="SMART" id="SM00450">
    <property type="entry name" value="RHOD"/>
    <property type="match status" value="1"/>
</dbReference>
<dbReference type="SUPFAM" id="SSF52821">
    <property type="entry name" value="Rhodanese/Cell cycle control phosphatase"/>
    <property type="match status" value="1"/>
</dbReference>
<dbReference type="PROSITE" id="PS50206">
    <property type="entry name" value="RHODANESE_3"/>
    <property type="match status" value="1"/>
</dbReference>
<sequence>MNHETNYHALLIADTPLIDVRAPIEFQQGAMPGAINLPLMMDDERAAVGTCYKRQGADAALSLGHRLVCGDIRQQRLEAWKAAYQRFPNGYLCCARGGQRSHIVQRWLQETGIDCPLIEGGYKALRQTAIQATWQLVQKPILLIGGCTGSGKTQLVRQQPNGVDLEGLARHRGSSFGRTLKPQLSQASFENKLAVELLKINARQTLKRWVLEDEGRTIGANHLPECLRERMAQAPITVVEDPFALRLERLREEYFIRMHHDFIHAYGDEGGWQAYSEYLHHGLFAIRRRLGLQRFAELTNTLDMALADQLSNGSTDGHMAWLVPLLNEYYDPMYRYQLEKKAANIVFRGTWQEVANWLKAQ</sequence>
<protein>
    <recommendedName>
        <fullName evidence="1">tRNA 2-selenouridine synthase</fullName>
        <ecNumber evidence="1">2.9.1.3</ecNumber>
    </recommendedName>
</protein>
<feature type="chain" id="PRO_0000335593" description="tRNA 2-selenouridine synthase">
    <location>
        <begin position="1"/>
        <end position="361"/>
    </location>
</feature>
<feature type="domain" description="Rhodanese" evidence="1">
    <location>
        <begin position="11"/>
        <end position="134"/>
    </location>
</feature>
<feature type="active site" description="S-selanylcysteine intermediate" evidence="1">
    <location>
        <position position="94"/>
    </location>
</feature>
<gene>
    <name evidence="1" type="primary">selU</name>
    <name type="ordered locus">SARI_02421</name>
</gene>
<comment type="function">
    <text evidence="1">Involved in the post-transcriptional modification of the uridine at the wobble position (U34) of tRNA(Lys), tRNA(Glu) and tRNA(Gln). Catalyzes the conversion of 2-thiouridine (S2U-RNA) to 2-selenouridine (Se2U-RNA). Acts in a two-step process involving geranylation of 2-thiouridine (S2U) to S-geranyl-2-thiouridine (geS2U) and subsequent selenation of the latter derivative to 2-selenouridine (Se2U) in the tRNA chain.</text>
</comment>
<comment type="catalytic activity">
    <reaction evidence="1">
        <text>5-methylaminomethyl-2-thiouridine(34) in tRNA + selenophosphate + (2E)-geranyl diphosphate + H2O + H(+) = 5-methylaminomethyl-2-selenouridine(34) in tRNA + (2E)-thiogeraniol + phosphate + diphosphate</text>
        <dbReference type="Rhea" id="RHEA:42716"/>
        <dbReference type="Rhea" id="RHEA-COMP:10195"/>
        <dbReference type="Rhea" id="RHEA-COMP:10196"/>
        <dbReference type="ChEBI" id="CHEBI:15377"/>
        <dbReference type="ChEBI" id="CHEBI:15378"/>
        <dbReference type="ChEBI" id="CHEBI:16144"/>
        <dbReference type="ChEBI" id="CHEBI:33019"/>
        <dbReference type="ChEBI" id="CHEBI:43474"/>
        <dbReference type="ChEBI" id="CHEBI:58057"/>
        <dbReference type="ChEBI" id="CHEBI:74455"/>
        <dbReference type="ChEBI" id="CHEBI:82743"/>
        <dbReference type="ChEBI" id="CHEBI:143703"/>
        <dbReference type="EC" id="2.9.1.3"/>
    </reaction>
    <physiologicalReaction direction="left-to-right" evidence="1">
        <dbReference type="Rhea" id="RHEA:42717"/>
    </physiologicalReaction>
</comment>
<comment type="catalytic activity">
    <reaction evidence="1">
        <text>5-methylaminomethyl-2-thiouridine(34) in tRNA + (2E)-geranyl diphosphate = 5-methylaminomethyl-S-(2E)-geranyl-thiouridine(34) in tRNA + diphosphate</text>
        <dbReference type="Rhea" id="RHEA:14085"/>
        <dbReference type="Rhea" id="RHEA-COMP:10195"/>
        <dbReference type="Rhea" id="RHEA-COMP:14654"/>
        <dbReference type="ChEBI" id="CHEBI:33019"/>
        <dbReference type="ChEBI" id="CHEBI:58057"/>
        <dbReference type="ChEBI" id="CHEBI:74455"/>
        <dbReference type="ChEBI" id="CHEBI:140632"/>
    </reaction>
    <physiologicalReaction direction="left-to-right" evidence="1">
        <dbReference type="Rhea" id="RHEA:14086"/>
    </physiologicalReaction>
</comment>
<comment type="catalytic activity">
    <reaction evidence="1">
        <text>5-methylaminomethyl-S-(2E)-geranyl-thiouridine(34) in tRNA + selenophosphate + H(+) = 5-methylaminomethyl-2-(Se-phospho)selenouridine(34) in tRNA + (2E)-thiogeraniol</text>
        <dbReference type="Rhea" id="RHEA:60172"/>
        <dbReference type="Rhea" id="RHEA-COMP:14654"/>
        <dbReference type="Rhea" id="RHEA-COMP:15523"/>
        <dbReference type="ChEBI" id="CHEBI:15378"/>
        <dbReference type="ChEBI" id="CHEBI:16144"/>
        <dbReference type="ChEBI" id="CHEBI:140632"/>
        <dbReference type="ChEBI" id="CHEBI:143702"/>
        <dbReference type="ChEBI" id="CHEBI:143703"/>
    </reaction>
    <physiologicalReaction direction="left-to-right" evidence="1">
        <dbReference type="Rhea" id="RHEA:60173"/>
    </physiologicalReaction>
</comment>
<comment type="catalytic activity">
    <reaction evidence="1">
        <text>5-methylaminomethyl-2-(Se-phospho)selenouridine(34) in tRNA + H2O = 5-methylaminomethyl-2-selenouridine(34) in tRNA + phosphate</text>
        <dbReference type="Rhea" id="RHEA:60176"/>
        <dbReference type="Rhea" id="RHEA-COMP:10196"/>
        <dbReference type="Rhea" id="RHEA-COMP:15523"/>
        <dbReference type="ChEBI" id="CHEBI:15377"/>
        <dbReference type="ChEBI" id="CHEBI:43474"/>
        <dbReference type="ChEBI" id="CHEBI:82743"/>
        <dbReference type="ChEBI" id="CHEBI:143702"/>
    </reaction>
    <physiologicalReaction direction="left-to-right" evidence="1">
        <dbReference type="Rhea" id="RHEA:60177"/>
    </physiologicalReaction>
</comment>
<comment type="subunit">
    <text evidence="1">Monomer.</text>
</comment>
<comment type="similarity">
    <text evidence="1">Belongs to the SelU family.</text>
</comment>
<organism>
    <name type="scientific">Salmonella arizonae (strain ATCC BAA-731 / CDC346-86 / RSK2980)</name>
    <dbReference type="NCBI Taxonomy" id="41514"/>
    <lineage>
        <taxon>Bacteria</taxon>
        <taxon>Pseudomonadati</taxon>
        <taxon>Pseudomonadota</taxon>
        <taxon>Gammaproteobacteria</taxon>
        <taxon>Enterobacterales</taxon>
        <taxon>Enterobacteriaceae</taxon>
        <taxon>Salmonella</taxon>
    </lineage>
</organism>
<reference key="1">
    <citation type="submission" date="2007-11" db="EMBL/GenBank/DDBJ databases">
        <authorList>
            <consortium name="The Salmonella enterica serovar Arizonae Genome Sequencing Project"/>
            <person name="McClelland M."/>
            <person name="Sanderson E.K."/>
            <person name="Porwollik S."/>
            <person name="Spieth J."/>
            <person name="Clifton W.S."/>
            <person name="Fulton R."/>
            <person name="Chunyan W."/>
            <person name="Wollam A."/>
            <person name="Shah N."/>
            <person name="Pepin K."/>
            <person name="Bhonagiri V."/>
            <person name="Nash W."/>
            <person name="Johnson M."/>
            <person name="Thiruvilangam P."/>
            <person name="Wilson R."/>
        </authorList>
    </citation>
    <scope>NUCLEOTIDE SEQUENCE [LARGE SCALE GENOMIC DNA]</scope>
    <source>
        <strain>ATCC BAA-731 / CDC346-86 / RSK2980</strain>
    </source>
</reference>
<proteinExistence type="inferred from homology"/>
<evidence type="ECO:0000255" key="1">
    <source>
        <dbReference type="HAMAP-Rule" id="MF_01622"/>
    </source>
</evidence>
<name>SELU_SALAR</name>
<keyword id="KW-1185">Reference proteome</keyword>
<keyword id="KW-0711">Selenium</keyword>
<keyword id="KW-0808">Transferase</keyword>
<accession>A9MLB3</accession>